<feature type="chain" id="PRO_0000208245" description="Probable mannosyltransferase KTR4">
    <location>
        <begin position="1"/>
        <end position="464"/>
    </location>
</feature>
<feature type="topological domain" description="Cytoplasmic" evidence="2">
    <location>
        <begin position="1"/>
        <end position="11"/>
    </location>
</feature>
<feature type="transmembrane region" description="Helical; Signal-anchor for type II membrane protein" evidence="2">
    <location>
        <begin position="12"/>
        <end position="32"/>
    </location>
</feature>
<feature type="topological domain" description="Lumenal" evidence="2">
    <location>
        <begin position="33"/>
        <end position="464"/>
    </location>
</feature>
<feature type="region of interest" description="Stem region" evidence="1">
    <location>
        <begin position="33"/>
        <end position="130"/>
    </location>
</feature>
<feature type="region of interest" description="Catalytic" evidence="1">
    <location>
        <begin position="131"/>
        <end position="464"/>
    </location>
</feature>
<feature type="active site" description="Nucleophile" evidence="2">
    <location>
        <position position="352"/>
    </location>
</feature>
<feature type="helix" evidence="5">
    <location>
        <begin position="71"/>
        <end position="82"/>
    </location>
</feature>
<feature type="helix" evidence="5">
    <location>
        <begin position="95"/>
        <end position="110"/>
    </location>
</feature>
<feature type="turn" evidence="5">
    <location>
        <begin position="128"/>
        <end position="131"/>
    </location>
</feature>
<feature type="strand" evidence="5">
    <location>
        <begin position="133"/>
        <end position="140"/>
    </location>
</feature>
<feature type="helix" evidence="5">
    <location>
        <begin position="143"/>
        <end position="145"/>
    </location>
</feature>
<feature type="helix" evidence="5">
    <location>
        <begin position="146"/>
        <end position="159"/>
    </location>
</feature>
<feature type="helix" evidence="5">
    <location>
        <begin position="161"/>
        <end position="163"/>
    </location>
</feature>
<feature type="strand" evidence="5">
    <location>
        <begin position="168"/>
        <end position="174"/>
    </location>
</feature>
<feature type="helix" evidence="5">
    <location>
        <begin position="178"/>
        <end position="187"/>
    </location>
</feature>
<feature type="strand" evidence="5">
    <location>
        <begin position="194"/>
        <end position="198"/>
    </location>
</feature>
<feature type="helix" evidence="5">
    <location>
        <begin position="201"/>
        <end position="203"/>
    </location>
</feature>
<feature type="helix" evidence="5">
    <location>
        <begin position="212"/>
        <end position="224"/>
    </location>
</feature>
<feature type="turn" evidence="5">
    <location>
        <begin position="228"/>
        <end position="231"/>
    </location>
</feature>
<feature type="helix" evidence="5">
    <location>
        <begin position="233"/>
        <end position="244"/>
    </location>
</feature>
<feature type="helix" evidence="5">
    <location>
        <begin position="246"/>
        <end position="248"/>
    </location>
</feature>
<feature type="helix" evidence="5">
    <location>
        <begin position="250"/>
        <end position="252"/>
    </location>
</feature>
<feature type="strand" evidence="5">
    <location>
        <begin position="256"/>
        <end position="260"/>
    </location>
</feature>
<feature type="helix" evidence="5">
    <location>
        <begin position="275"/>
        <end position="281"/>
    </location>
</feature>
<feature type="strand" evidence="5">
    <location>
        <begin position="286"/>
        <end position="289"/>
    </location>
</feature>
<feature type="strand" evidence="5">
    <location>
        <begin position="291"/>
        <end position="293"/>
    </location>
</feature>
<feature type="helix" evidence="5">
    <location>
        <begin position="296"/>
        <end position="298"/>
    </location>
</feature>
<feature type="helix" evidence="5">
    <location>
        <begin position="302"/>
        <end position="312"/>
    </location>
</feature>
<feature type="helix" evidence="5">
    <location>
        <begin position="314"/>
        <end position="316"/>
    </location>
</feature>
<feature type="helix" evidence="5">
    <location>
        <begin position="323"/>
        <end position="327"/>
    </location>
</feature>
<feature type="helix" evidence="5">
    <location>
        <begin position="333"/>
        <end position="338"/>
    </location>
</feature>
<feature type="strand" evidence="5">
    <location>
        <begin position="345"/>
        <end position="347"/>
    </location>
</feature>
<feature type="strand" evidence="5">
    <location>
        <begin position="351"/>
        <end position="355"/>
    </location>
</feature>
<feature type="helix" evidence="5">
    <location>
        <begin position="356"/>
        <end position="360"/>
    </location>
</feature>
<feature type="helix" evidence="5">
    <location>
        <begin position="362"/>
        <end position="374"/>
    </location>
</feature>
<feature type="helix" evidence="5">
    <location>
        <begin position="376"/>
        <end position="379"/>
    </location>
</feature>
<feature type="helix" evidence="5">
    <location>
        <begin position="384"/>
        <end position="395"/>
    </location>
</feature>
<feature type="helix" evidence="5">
    <location>
        <begin position="398"/>
        <end position="400"/>
    </location>
</feature>
<feature type="strand" evidence="5">
    <location>
        <begin position="401"/>
        <end position="403"/>
    </location>
</feature>
<feature type="strand" evidence="5">
    <location>
        <begin position="409"/>
        <end position="411"/>
    </location>
</feature>
<feature type="strand" evidence="5">
    <location>
        <begin position="414"/>
        <end position="416"/>
    </location>
</feature>
<feature type="strand" evidence="5">
    <location>
        <begin position="429"/>
        <end position="431"/>
    </location>
</feature>
<feature type="helix" evidence="5">
    <location>
        <begin position="440"/>
        <end position="445"/>
    </location>
</feature>
<feature type="helix" evidence="5">
    <location>
        <begin position="448"/>
        <end position="455"/>
    </location>
</feature>
<feature type="helix" evidence="5">
    <location>
        <begin position="458"/>
        <end position="461"/>
    </location>
</feature>
<accession>P38131</accession>
<accession>D6VQJ5</accession>
<accession>P89506</accession>
<name>KTR4_YEAST</name>
<proteinExistence type="evidence at protein level"/>
<evidence type="ECO:0000250" key="1"/>
<evidence type="ECO:0000255" key="2"/>
<evidence type="ECO:0000269" key="3">
    <source>
    </source>
</evidence>
<evidence type="ECO:0000305" key="4"/>
<evidence type="ECO:0007829" key="5">
    <source>
        <dbReference type="PDB" id="5A07"/>
    </source>
</evidence>
<reference key="1">
    <citation type="journal article" date="1994" name="Yeast">
        <title>Nucleotide sequence analysis of an 11.7 kb fragment of yeast chromosome II including BEM1, a new gene of the WD-40 repeat family and a new member of the KRE2/MNT1 family.</title>
        <authorList>
            <person name="Mallet L."/>
            <person name="Bussereau F."/>
            <person name="Jacquet M."/>
        </authorList>
    </citation>
    <scope>NUCLEOTIDE SEQUENCE [GENOMIC DNA]</scope>
    <source>
        <strain>ATCC 204508 / S288c</strain>
    </source>
</reference>
<reference key="2">
    <citation type="journal article" date="1994" name="EMBO J.">
        <title>Complete DNA sequence of yeast chromosome II.</title>
        <authorList>
            <person name="Feldmann H."/>
            <person name="Aigle M."/>
            <person name="Aljinovic G."/>
            <person name="Andre B."/>
            <person name="Baclet M.C."/>
            <person name="Barthe C."/>
            <person name="Baur A."/>
            <person name="Becam A.-M."/>
            <person name="Biteau N."/>
            <person name="Boles E."/>
            <person name="Brandt T."/>
            <person name="Brendel M."/>
            <person name="Brueckner M."/>
            <person name="Bussereau F."/>
            <person name="Christiansen C."/>
            <person name="Contreras R."/>
            <person name="Crouzet M."/>
            <person name="Cziepluch C."/>
            <person name="Demolis N."/>
            <person name="Delaveau T."/>
            <person name="Doignon F."/>
            <person name="Domdey H."/>
            <person name="Duesterhus S."/>
            <person name="Dubois E."/>
            <person name="Dujon B."/>
            <person name="El Bakkoury M."/>
            <person name="Entian K.-D."/>
            <person name="Feuermann M."/>
            <person name="Fiers W."/>
            <person name="Fobo G.M."/>
            <person name="Fritz C."/>
            <person name="Gassenhuber J."/>
            <person name="Glansdorff N."/>
            <person name="Goffeau A."/>
            <person name="Grivell L.A."/>
            <person name="de Haan M."/>
            <person name="Hein C."/>
            <person name="Herbert C.J."/>
            <person name="Hollenberg C.P."/>
            <person name="Holmstroem K."/>
            <person name="Jacq C."/>
            <person name="Jacquet M."/>
            <person name="Jauniaux J.-C."/>
            <person name="Jonniaux J.-L."/>
            <person name="Kallesoee T."/>
            <person name="Kiesau P."/>
            <person name="Kirchrath L."/>
            <person name="Koetter P."/>
            <person name="Korol S."/>
            <person name="Liebl S."/>
            <person name="Logghe M."/>
            <person name="Lohan A.J.E."/>
            <person name="Louis E.J."/>
            <person name="Li Z.Y."/>
            <person name="Maat M.J."/>
            <person name="Mallet L."/>
            <person name="Mannhaupt G."/>
            <person name="Messenguy F."/>
            <person name="Miosga T."/>
            <person name="Molemans F."/>
            <person name="Mueller S."/>
            <person name="Nasr F."/>
            <person name="Obermaier B."/>
            <person name="Perea J."/>
            <person name="Pierard A."/>
            <person name="Piravandi E."/>
            <person name="Pohl F.M."/>
            <person name="Pohl T.M."/>
            <person name="Potier S."/>
            <person name="Proft M."/>
            <person name="Purnelle B."/>
            <person name="Ramezani Rad M."/>
            <person name="Rieger M."/>
            <person name="Rose M."/>
            <person name="Schaaff-Gerstenschlaeger I."/>
            <person name="Scherens B."/>
            <person name="Schwarzlose C."/>
            <person name="Skala J."/>
            <person name="Slonimski P.P."/>
            <person name="Smits P.H.M."/>
            <person name="Souciet J.-L."/>
            <person name="Steensma H.Y."/>
            <person name="Stucka R."/>
            <person name="Urrestarazu L.A."/>
            <person name="van der Aart Q.J.M."/>
            <person name="Van Dyck L."/>
            <person name="Vassarotti A."/>
            <person name="Vetter I."/>
            <person name="Vierendeels F."/>
            <person name="Vissers S."/>
            <person name="Wagner G."/>
            <person name="de Wergifosse P."/>
            <person name="Wolfe K.H."/>
            <person name="Zagulski M."/>
            <person name="Zimmermann F.K."/>
            <person name="Mewes H.-W."/>
            <person name="Kleine K."/>
        </authorList>
    </citation>
    <scope>NUCLEOTIDE SEQUENCE [LARGE SCALE GENOMIC DNA]</scope>
    <source>
        <strain>ATCC 204508 / S288c</strain>
    </source>
</reference>
<reference key="3">
    <citation type="journal article" date="2014" name="G3 (Bethesda)">
        <title>The reference genome sequence of Saccharomyces cerevisiae: Then and now.</title>
        <authorList>
            <person name="Engel S.R."/>
            <person name="Dietrich F.S."/>
            <person name="Fisk D.G."/>
            <person name="Binkley G."/>
            <person name="Balakrishnan R."/>
            <person name="Costanzo M.C."/>
            <person name="Dwight S.S."/>
            <person name="Hitz B.C."/>
            <person name="Karra K."/>
            <person name="Nash R.S."/>
            <person name="Weng S."/>
            <person name="Wong E.D."/>
            <person name="Lloyd P."/>
            <person name="Skrzypek M.S."/>
            <person name="Miyasato S.R."/>
            <person name="Simison M."/>
            <person name="Cherry J.M."/>
        </authorList>
    </citation>
    <scope>GENOME REANNOTATION</scope>
    <source>
        <strain>ATCC 204508 / S288c</strain>
    </source>
</reference>
<reference key="4">
    <citation type="journal article" date="2007" name="Genome Res.">
        <title>Approaching a complete repository of sequence-verified protein-encoding clones for Saccharomyces cerevisiae.</title>
        <authorList>
            <person name="Hu Y."/>
            <person name="Rolfs A."/>
            <person name="Bhullar B."/>
            <person name="Murthy T.V.S."/>
            <person name="Zhu C."/>
            <person name="Berger M.F."/>
            <person name="Camargo A.A."/>
            <person name="Kelley F."/>
            <person name="McCarron S."/>
            <person name="Jepson D."/>
            <person name="Richardson A."/>
            <person name="Raphael J."/>
            <person name="Moreira D."/>
            <person name="Taycher E."/>
            <person name="Zuo D."/>
            <person name="Mohr S."/>
            <person name="Kane M.F."/>
            <person name="Williamson J."/>
            <person name="Simpson A.J.G."/>
            <person name="Bulyk M.L."/>
            <person name="Harlow E."/>
            <person name="Marsischky G."/>
            <person name="Kolodner R.D."/>
            <person name="LaBaer J."/>
        </authorList>
    </citation>
    <scope>NUCLEOTIDE SEQUENCE [GENOMIC DNA]</scope>
    <source>
        <strain>ATCC 204508 / S288c</strain>
    </source>
</reference>
<reference key="5">
    <citation type="journal article" date="2003" name="Nature">
        <title>Global analysis of protein expression in yeast.</title>
        <authorList>
            <person name="Ghaemmaghami S."/>
            <person name="Huh W.-K."/>
            <person name="Bower K."/>
            <person name="Howson R.W."/>
            <person name="Belle A."/>
            <person name="Dephoure N."/>
            <person name="O'Shea E.K."/>
            <person name="Weissman J.S."/>
        </authorList>
    </citation>
    <scope>LEVEL OF PROTEIN EXPRESSION [LARGE SCALE ANALYSIS]</scope>
</reference>
<reference key="6">
    <citation type="journal article" date="2009" name="Science">
        <title>Global analysis of Cdk1 substrate phosphorylation sites provides insights into evolution.</title>
        <authorList>
            <person name="Holt L.J."/>
            <person name="Tuch B.B."/>
            <person name="Villen J."/>
            <person name="Johnson A.D."/>
            <person name="Gygi S.P."/>
            <person name="Morgan D.O."/>
        </authorList>
    </citation>
    <scope>IDENTIFICATION BY MASS SPECTROMETRY [LARGE SCALE ANALYSIS]</scope>
</reference>
<sequence>MRFLSKRILKPVLSVIILISIAVTVVLYFLTANENYLQAVKDSAKSQYASLRESYKSITGKTESADELPDHDAEVLDSIMDRLHEPLYEKDTFDPNEVLAENKQLYEEFLLQEISEPKVDNLVRSGDPLAGKAKGTILSLVRNSDLEDIISSIQQLEEEYNKNFGYPYTFLNDEEFTDEFKDGIKSILPKDRVVEFGTIGPDNWNMPDSIDRERYDQEMDKMSKENIQYAEVESYHNMCRFYSKEFYHHPLLSKYKYVWRLEPNVNFYCKINYDVFQFMNKNDKIYGFVLNLYDSPQTIETLWTSTMDFVEEHPNYLNVNGAFAWLKDNSQNPKNYDYTQGYSTCHFWTNFEIVDLDFLRSEPYEKYMQYLEEKGGFYYERWGDAPVRSLALALFADKSSIHWFRDIGYHHTPYTNCPTCPADSDRCNGNCVPGKFTPWSDLDNQNCQATWIRHSMSEEELEMY</sequence>
<comment type="function">
    <text>Possible glycosyltransferase that transfers an alpha-D-mannosyl residue from GDP-mannose into lipid-linked oligosaccharide, forming an alpha-(1-&gt;2)-D-mannosyl-D-mannose linkage.</text>
</comment>
<comment type="subcellular location">
    <subcellularLocation>
        <location evidence="4">Membrane</location>
        <topology evidence="4">Single-pass type II membrane protein</topology>
    </subcellularLocation>
</comment>
<comment type="miscellaneous">
    <text evidence="3">Present with 5240 molecules/cell in log phase SD medium.</text>
</comment>
<comment type="similarity">
    <text evidence="4">Belongs to the glycosyltransferase 15 family.</text>
</comment>
<gene>
    <name type="primary">KTR4</name>
    <name type="ordered locus">YBR199W</name>
    <name type="ORF">YBR1411</name>
</gene>
<keyword id="KW-0002">3D-structure</keyword>
<keyword id="KW-0328">Glycosyltransferase</keyword>
<keyword id="KW-0472">Membrane</keyword>
<keyword id="KW-1185">Reference proteome</keyword>
<keyword id="KW-0735">Signal-anchor</keyword>
<keyword id="KW-0808">Transferase</keyword>
<keyword id="KW-0812">Transmembrane</keyword>
<keyword id="KW-1133">Transmembrane helix</keyword>
<organism>
    <name type="scientific">Saccharomyces cerevisiae (strain ATCC 204508 / S288c)</name>
    <name type="common">Baker's yeast</name>
    <dbReference type="NCBI Taxonomy" id="559292"/>
    <lineage>
        <taxon>Eukaryota</taxon>
        <taxon>Fungi</taxon>
        <taxon>Dikarya</taxon>
        <taxon>Ascomycota</taxon>
        <taxon>Saccharomycotina</taxon>
        <taxon>Saccharomycetes</taxon>
        <taxon>Saccharomycetales</taxon>
        <taxon>Saccharomycetaceae</taxon>
        <taxon>Saccharomyces</taxon>
    </lineage>
</organism>
<dbReference type="EC" id="2.4.1.-"/>
<dbReference type="EMBL" id="Z21487">
    <property type="protein sequence ID" value="CAA79686.1"/>
    <property type="molecule type" value="Genomic_DNA"/>
</dbReference>
<dbReference type="EMBL" id="Z36068">
    <property type="protein sequence ID" value="CAA85161.1"/>
    <property type="molecule type" value="Genomic_DNA"/>
</dbReference>
<dbReference type="EMBL" id="Z36069">
    <property type="protein sequence ID" value="CAA85163.1"/>
    <property type="molecule type" value="Genomic_DNA"/>
</dbReference>
<dbReference type="EMBL" id="AY692898">
    <property type="protein sequence ID" value="AAT92917.1"/>
    <property type="molecule type" value="Genomic_DNA"/>
</dbReference>
<dbReference type="EMBL" id="BK006936">
    <property type="protein sequence ID" value="DAA07315.1"/>
    <property type="molecule type" value="Genomic_DNA"/>
</dbReference>
<dbReference type="PIR" id="S34024">
    <property type="entry name" value="S34024"/>
</dbReference>
<dbReference type="RefSeq" id="NP_009758.3">
    <property type="nucleotide sequence ID" value="NM_001178547.3"/>
</dbReference>
<dbReference type="PDB" id="5A07">
    <property type="method" value="X-ray"/>
    <property type="resolution" value="1.90 A"/>
    <property type="chains" value="A/B=33-464"/>
</dbReference>
<dbReference type="PDB" id="5A08">
    <property type="method" value="X-ray"/>
    <property type="resolution" value="2.21 A"/>
    <property type="chains" value="A/B=33-464"/>
</dbReference>
<dbReference type="PDBsum" id="5A07"/>
<dbReference type="PDBsum" id="5A08"/>
<dbReference type="SMR" id="P38131"/>
<dbReference type="BioGRID" id="32896">
    <property type="interactions" value="55"/>
</dbReference>
<dbReference type="DIP" id="DIP-7838N"/>
<dbReference type="FunCoup" id="P38131">
    <property type="interactions" value="68"/>
</dbReference>
<dbReference type="IntAct" id="P38131">
    <property type="interactions" value="3"/>
</dbReference>
<dbReference type="MINT" id="P38131"/>
<dbReference type="STRING" id="4932.YBR199W"/>
<dbReference type="CAZy" id="GT15">
    <property type="family name" value="Glycosyltransferase Family 15"/>
</dbReference>
<dbReference type="iPTMnet" id="P38131"/>
<dbReference type="PaxDb" id="4932-YBR199W"/>
<dbReference type="PeptideAtlas" id="P38131"/>
<dbReference type="EnsemblFungi" id="YBR199W_mRNA">
    <property type="protein sequence ID" value="YBR199W"/>
    <property type="gene ID" value="YBR199W"/>
</dbReference>
<dbReference type="GeneID" id="852498"/>
<dbReference type="KEGG" id="sce:YBR199W"/>
<dbReference type="AGR" id="SGD:S000000403"/>
<dbReference type="SGD" id="S000000403">
    <property type="gene designation" value="KTR4"/>
</dbReference>
<dbReference type="VEuPathDB" id="FungiDB:YBR199W"/>
<dbReference type="eggNOG" id="KOG4472">
    <property type="taxonomic scope" value="Eukaryota"/>
</dbReference>
<dbReference type="GeneTree" id="ENSGT00940000176287"/>
<dbReference type="HOGENOM" id="CLU_024327_1_1_1"/>
<dbReference type="InParanoid" id="P38131"/>
<dbReference type="OMA" id="WCFFLYQ"/>
<dbReference type="OrthoDB" id="439943at2759"/>
<dbReference type="BioCyc" id="YEAST:G3O-29140-MONOMER"/>
<dbReference type="BioGRID-ORCS" id="852498">
    <property type="hits" value="0 hits in 10 CRISPR screens"/>
</dbReference>
<dbReference type="EvolutionaryTrace" id="P38131"/>
<dbReference type="PRO" id="PR:P38131"/>
<dbReference type="Proteomes" id="UP000002311">
    <property type="component" value="Chromosome II"/>
</dbReference>
<dbReference type="RNAct" id="P38131">
    <property type="molecule type" value="protein"/>
</dbReference>
<dbReference type="GO" id="GO:0000324">
    <property type="term" value="C:fungal-type vacuole"/>
    <property type="evidence" value="ECO:0007005"/>
    <property type="project" value="SGD"/>
</dbReference>
<dbReference type="GO" id="GO:0005794">
    <property type="term" value="C:Golgi apparatus"/>
    <property type="evidence" value="ECO:0000250"/>
    <property type="project" value="SGD"/>
</dbReference>
<dbReference type="GO" id="GO:0016020">
    <property type="term" value="C:membrane"/>
    <property type="evidence" value="ECO:0007669"/>
    <property type="project" value="UniProtKB-SubCell"/>
</dbReference>
<dbReference type="GO" id="GO:0000026">
    <property type="term" value="F:alpha-1,2-mannosyltransferase activity"/>
    <property type="evidence" value="ECO:0000318"/>
    <property type="project" value="GO_Central"/>
</dbReference>
<dbReference type="GO" id="GO:0000030">
    <property type="term" value="F:mannosyltransferase activity"/>
    <property type="evidence" value="ECO:0000314"/>
    <property type="project" value="SGD"/>
</dbReference>
<dbReference type="GO" id="GO:0000032">
    <property type="term" value="P:cell wall mannoprotein biosynthetic process"/>
    <property type="evidence" value="ECO:0000318"/>
    <property type="project" value="GO_Central"/>
</dbReference>
<dbReference type="GO" id="GO:0006487">
    <property type="term" value="P:protein N-linked glycosylation"/>
    <property type="evidence" value="ECO:0000250"/>
    <property type="project" value="SGD"/>
</dbReference>
<dbReference type="GO" id="GO:0006493">
    <property type="term" value="P:protein O-linked glycosylation"/>
    <property type="evidence" value="ECO:0000318"/>
    <property type="project" value="GO_Central"/>
</dbReference>
<dbReference type="FunFam" id="3.90.550.10:FF:000051">
    <property type="entry name" value="Alpha-1,2-mannosyltransferase (Ktr4)"/>
    <property type="match status" value="1"/>
</dbReference>
<dbReference type="Gene3D" id="3.90.550.10">
    <property type="entry name" value="Spore Coat Polysaccharide Biosynthesis Protein SpsA, Chain A"/>
    <property type="match status" value="1"/>
</dbReference>
<dbReference type="InterPro" id="IPR002685">
    <property type="entry name" value="Glyco_trans_15"/>
</dbReference>
<dbReference type="InterPro" id="IPR029044">
    <property type="entry name" value="Nucleotide-diphossugar_trans"/>
</dbReference>
<dbReference type="PANTHER" id="PTHR31121">
    <property type="entry name" value="ALPHA-1,2 MANNOSYLTRANSFERASE KTR1"/>
    <property type="match status" value="1"/>
</dbReference>
<dbReference type="PANTHER" id="PTHR31121:SF7">
    <property type="entry name" value="MANNOSYLTRANSFERASE KTR4-RELATED"/>
    <property type="match status" value="1"/>
</dbReference>
<dbReference type="Pfam" id="PF01793">
    <property type="entry name" value="Glyco_transf_15"/>
    <property type="match status" value="1"/>
</dbReference>
<dbReference type="PIRSF" id="PIRSF018153">
    <property type="entry name" value="Glyco_trans_15"/>
    <property type="match status" value="1"/>
</dbReference>
<dbReference type="SUPFAM" id="SSF53448">
    <property type="entry name" value="Nucleotide-diphospho-sugar transferases"/>
    <property type="match status" value="1"/>
</dbReference>
<protein>
    <recommendedName>
        <fullName>Probable mannosyltransferase KTR4</fullName>
        <ecNumber>2.4.1.-</ecNumber>
    </recommendedName>
</protein>